<accession>Q48KP5</accession>
<dbReference type="EC" id="4.1.1.23" evidence="1"/>
<dbReference type="EMBL" id="CP000058">
    <property type="protein sequence ID" value="AAZ34149.1"/>
    <property type="status" value="ALT_INIT"/>
    <property type="molecule type" value="Genomic_DNA"/>
</dbReference>
<dbReference type="RefSeq" id="WP_041924767.1">
    <property type="nucleotide sequence ID" value="NC_005773.3"/>
</dbReference>
<dbReference type="SMR" id="Q48KP5"/>
<dbReference type="KEGG" id="psp:PSPPH_1796"/>
<dbReference type="eggNOG" id="COG0284">
    <property type="taxonomic scope" value="Bacteria"/>
</dbReference>
<dbReference type="HOGENOM" id="CLU_067069_0_0_6"/>
<dbReference type="UniPathway" id="UPA00070">
    <property type="reaction ID" value="UER00120"/>
</dbReference>
<dbReference type="Proteomes" id="UP000000551">
    <property type="component" value="Chromosome"/>
</dbReference>
<dbReference type="GO" id="GO:0005829">
    <property type="term" value="C:cytosol"/>
    <property type="evidence" value="ECO:0007669"/>
    <property type="project" value="TreeGrafter"/>
</dbReference>
<dbReference type="GO" id="GO:0004590">
    <property type="term" value="F:orotidine-5'-phosphate decarboxylase activity"/>
    <property type="evidence" value="ECO:0007669"/>
    <property type="project" value="UniProtKB-UniRule"/>
</dbReference>
<dbReference type="GO" id="GO:0006207">
    <property type="term" value="P:'de novo' pyrimidine nucleobase biosynthetic process"/>
    <property type="evidence" value="ECO:0007669"/>
    <property type="project" value="InterPro"/>
</dbReference>
<dbReference type="GO" id="GO:0044205">
    <property type="term" value="P:'de novo' UMP biosynthetic process"/>
    <property type="evidence" value="ECO:0007669"/>
    <property type="project" value="UniProtKB-UniRule"/>
</dbReference>
<dbReference type="CDD" id="cd04725">
    <property type="entry name" value="OMP_decarboxylase_like"/>
    <property type="match status" value="1"/>
</dbReference>
<dbReference type="FunFam" id="3.20.20.70:FF:000015">
    <property type="entry name" value="Orotidine 5'-phosphate decarboxylase"/>
    <property type="match status" value="1"/>
</dbReference>
<dbReference type="Gene3D" id="3.20.20.70">
    <property type="entry name" value="Aldolase class I"/>
    <property type="match status" value="1"/>
</dbReference>
<dbReference type="HAMAP" id="MF_01200_B">
    <property type="entry name" value="OMPdecase_type1_B"/>
    <property type="match status" value="1"/>
</dbReference>
<dbReference type="InterPro" id="IPR013785">
    <property type="entry name" value="Aldolase_TIM"/>
</dbReference>
<dbReference type="InterPro" id="IPR014732">
    <property type="entry name" value="OMPdecase"/>
</dbReference>
<dbReference type="InterPro" id="IPR018089">
    <property type="entry name" value="OMPdecase_AS"/>
</dbReference>
<dbReference type="InterPro" id="IPR047596">
    <property type="entry name" value="OMPdecase_bac"/>
</dbReference>
<dbReference type="InterPro" id="IPR001754">
    <property type="entry name" value="OMPdeCOase_dom"/>
</dbReference>
<dbReference type="InterPro" id="IPR011060">
    <property type="entry name" value="RibuloseP-bd_barrel"/>
</dbReference>
<dbReference type="NCBIfam" id="NF001273">
    <property type="entry name" value="PRK00230.1"/>
    <property type="match status" value="1"/>
</dbReference>
<dbReference type="NCBIfam" id="TIGR01740">
    <property type="entry name" value="pyrF"/>
    <property type="match status" value="1"/>
</dbReference>
<dbReference type="PANTHER" id="PTHR32119">
    <property type="entry name" value="OROTIDINE 5'-PHOSPHATE DECARBOXYLASE"/>
    <property type="match status" value="1"/>
</dbReference>
<dbReference type="PANTHER" id="PTHR32119:SF2">
    <property type="entry name" value="OROTIDINE 5'-PHOSPHATE DECARBOXYLASE"/>
    <property type="match status" value="1"/>
</dbReference>
<dbReference type="Pfam" id="PF00215">
    <property type="entry name" value="OMPdecase"/>
    <property type="match status" value="1"/>
</dbReference>
<dbReference type="SMART" id="SM00934">
    <property type="entry name" value="OMPdecase"/>
    <property type="match status" value="1"/>
</dbReference>
<dbReference type="SUPFAM" id="SSF51366">
    <property type="entry name" value="Ribulose-phoshate binding barrel"/>
    <property type="match status" value="1"/>
</dbReference>
<dbReference type="PROSITE" id="PS00156">
    <property type="entry name" value="OMPDECASE"/>
    <property type="match status" value="1"/>
</dbReference>
<reference key="1">
    <citation type="journal article" date="2005" name="J. Bacteriol.">
        <title>Whole-genome sequence analysis of Pseudomonas syringae pv. phaseolicola 1448A reveals divergence among pathovars in genes involved in virulence and transposition.</title>
        <authorList>
            <person name="Joardar V."/>
            <person name="Lindeberg M."/>
            <person name="Jackson R.W."/>
            <person name="Selengut J."/>
            <person name="Dodson R."/>
            <person name="Brinkac L.M."/>
            <person name="Daugherty S.C."/>
            <person name="DeBoy R.T."/>
            <person name="Durkin A.S."/>
            <person name="Gwinn Giglio M."/>
            <person name="Madupu R."/>
            <person name="Nelson W.C."/>
            <person name="Rosovitz M.J."/>
            <person name="Sullivan S.A."/>
            <person name="Crabtree J."/>
            <person name="Creasy T."/>
            <person name="Davidsen T.M."/>
            <person name="Haft D.H."/>
            <person name="Zafar N."/>
            <person name="Zhou L."/>
            <person name="Halpin R."/>
            <person name="Holley T."/>
            <person name="Khouri H.M."/>
            <person name="Feldblyum T.V."/>
            <person name="White O."/>
            <person name="Fraser C.M."/>
            <person name="Chatterjee A.K."/>
            <person name="Cartinhour S."/>
            <person name="Schneider D."/>
            <person name="Mansfield J.W."/>
            <person name="Collmer A."/>
            <person name="Buell R."/>
        </authorList>
    </citation>
    <scope>NUCLEOTIDE SEQUENCE [LARGE SCALE GENOMIC DNA]</scope>
    <source>
        <strain>1448A / Race 6</strain>
    </source>
</reference>
<feature type="chain" id="PRO_0000241891" description="Orotidine 5'-phosphate decarboxylase">
    <location>
        <begin position="1"/>
        <end position="232"/>
    </location>
</feature>
<feature type="active site" description="Proton donor" evidence="1">
    <location>
        <position position="64"/>
    </location>
</feature>
<feature type="binding site" evidence="1">
    <location>
        <position position="13"/>
    </location>
    <ligand>
        <name>substrate</name>
    </ligand>
</feature>
<feature type="binding site" evidence="1">
    <location>
        <position position="35"/>
    </location>
    <ligand>
        <name>substrate</name>
    </ligand>
</feature>
<feature type="binding site" evidence="1">
    <location>
        <begin position="62"/>
        <end position="71"/>
    </location>
    <ligand>
        <name>substrate</name>
    </ligand>
</feature>
<feature type="binding site" evidence="1">
    <location>
        <position position="122"/>
    </location>
    <ligand>
        <name>substrate</name>
    </ligand>
</feature>
<feature type="binding site" evidence="1">
    <location>
        <position position="182"/>
    </location>
    <ligand>
        <name>substrate</name>
    </ligand>
</feature>
<feature type="binding site" evidence="1">
    <location>
        <position position="191"/>
    </location>
    <ligand>
        <name>substrate</name>
    </ligand>
</feature>
<feature type="binding site" evidence="1">
    <location>
        <position position="211"/>
    </location>
    <ligand>
        <name>substrate</name>
    </ligand>
</feature>
<feature type="binding site" evidence="1">
    <location>
        <position position="212"/>
    </location>
    <ligand>
        <name>substrate</name>
    </ligand>
</feature>
<gene>
    <name evidence="1" type="primary">pyrF</name>
    <name type="ordered locus">PSPPH_1796</name>
</gene>
<comment type="function">
    <text evidence="1">Catalyzes the decarboxylation of orotidine 5'-monophosphate (OMP) to uridine 5'-monophosphate (UMP).</text>
</comment>
<comment type="catalytic activity">
    <reaction evidence="1">
        <text>orotidine 5'-phosphate + H(+) = UMP + CO2</text>
        <dbReference type="Rhea" id="RHEA:11596"/>
        <dbReference type="ChEBI" id="CHEBI:15378"/>
        <dbReference type="ChEBI" id="CHEBI:16526"/>
        <dbReference type="ChEBI" id="CHEBI:57538"/>
        <dbReference type="ChEBI" id="CHEBI:57865"/>
        <dbReference type="EC" id="4.1.1.23"/>
    </reaction>
</comment>
<comment type="pathway">
    <text evidence="1">Pyrimidine metabolism; UMP biosynthesis via de novo pathway; UMP from orotate: step 2/2.</text>
</comment>
<comment type="subunit">
    <text evidence="1">Homodimer.</text>
</comment>
<comment type="similarity">
    <text evidence="1">Belongs to the OMP decarboxylase family. Type 1 subfamily.</text>
</comment>
<comment type="sequence caution" evidence="2">
    <conflict type="erroneous initiation">
        <sequence resource="EMBL-CDS" id="AAZ34149"/>
    </conflict>
</comment>
<sequence>MSACQTPVIVALDFPTREAALRLADQLDPKLCRVKVGKELFISCAADIVETLRNKGFEVFLDLKFHDIPNTTAMAVKAAAEMGVWMVNVHCSGGLRMMTACREVLEQRSGPQPLLIGVTVLTSMEREDLAGIGLDIDPQVQVLRLAALAEKAGLDGLVCSALEAQALKAAHPSLQLVTPGIRPAGSAQDDQRRILTPRQALDAGSDHLVIGRPISQAADPAKALAAVVAELA</sequence>
<protein>
    <recommendedName>
        <fullName evidence="1">Orotidine 5'-phosphate decarboxylase</fullName>
        <ecNumber evidence="1">4.1.1.23</ecNumber>
    </recommendedName>
    <alternativeName>
        <fullName evidence="1">OMP decarboxylase</fullName>
        <shortName evidence="1">OMPDCase</shortName>
        <shortName evidence="1">OMPdecase</shortName>
    </alternativeName>
</protein>
<organism>
    <name type="scientific">Pseudomonas savastanoi pv. phaseolicola (strain 1448A / Race 6)</name>
    <name type="common">Pseudomonas syringae pv. phaseolicola (strain 1448A / Race 6)</name>
    <dbReference type="NCBI Taxonomy" id="264730"/>
    <lineage>
        <taxon>Bacteria</taxon>
        <taxon>Pseudomonadati</taxon>
        <taxon>Pseudomonadota</taxon>
        <taxon>Gammaproteobacteria</taxon>
        <taxon>Pseudomonadales</taxon>
        <taxon>Pseudomonadaceae</taxon>
        <taxon>Pseudomonas</taxon>
    </lineage>
</organism>
<keyword id="KW-0210">Decarboxylase</keyword>
<keyword id="KW-0456">Lyase</keyword>
<keyword id="KW-0665">Pyrimidine biosynthesis</keyword>
<evidence type="ECO:0000255" key="1">
    <source>
        <dbReference type="HAMAP-Rule" id="MF_01200"/>
    </source>
</evidence>
<evidence type="ECO:0000305" key="2"/>
<name>PYRF_PSE14</name>
<proteinExistence type="inferred from homology"/>